<protein>
    <recommendedName>
        <fullName evidence="1">Dual-specificity RNA methyltransferase RlmN</fullName>
        <ecNumber evidence="1">2.1.1.192</ecNumber>
    </recommendedName>
    <alternativeName>
        <fullName evidence="1">23S rRNA (adenine(2503)-C(2))-methyltransferase</fullName>
    </alternativeName>
    <alternativeName>
        <fullName evidence="1">23S rRNA m2A2503 methyltransferase</fullName>
    </alternativeName>
    <alternativeName>
        <fullName evidence="1">Ribosomal RNA large subunit methyltransferase N</fullName>
    </alternativeName>
    <alternativeName>
        <fullName evidence="1">tRNA (adenine(37)-C(2))-methyltransferase</fullName>
    </alternativeName>
    <alternativeName>
        <fullName evidence="1">tRNA m2A37 methyltransferase</fullName>
    </alternativeName>
</protein>
<accession>Q1H0U6</accession>
<reference key="1">
    <citation type="submission" date="2006-03" db="EMBL/GenBank/DDBJ databases">
        <title>Complete sequence of Methylobacillus flagellatus KT.</title>
        <authorList>
            <consortium name="US DOE Joint Genome Institute"/>
            <person name="Copeland A."/>
            <person name="Lucas S."/>
            <person name="Lapidus A."/>
            <person name="Barry K."/>
            <person name="Detter J.C."/>
            <person name="Glavina del Rio T."/>
            <person name="Hammon N."/>
            <person name="Israni S."/>
            <person name="Dalin E."/>
            <person name="Tice H."/>
            <person name="Pitluck S."/>
            <person name="Brettin T."/>
            <person name="Bruce D."/>
            <person name="Han C."/>
            <person name="Tapia R."/>
            <person name="Saunders E."/>
            <person name="Gilna P."/>
            <person name="Schmutz J."/>
            <person name="Larimer F."/>
            <person name="Land M."/>
            <person name="Kyrpides N."/>
            <person name="Anderson I."/>
            <person name="Richardson P."/>
        </authorList>
    </citation>
    <scope>NUCLEOTIDE SEQUENCE [LARGE SCALE GENOMIC DNA]</scope>
    <source>
        <strain>ATCC 51484 / DSM 6875 / VKM B-1610 / KT</strain>
    </source>
</reference>
<name>RLMN_METFK</name>
<comment type="function">
    <text evidence="1">Specifically methylates position 2 of adenine 2503 in 23S rRNA and position 2 of adenine 37 in tRNAs. m2A2503 modification seems to play a crucial role in the proofreading step occurring at the peptidyl transferase center and thus would serve to optimize ribosomal fidelity.</text>
</comment>
<comment type="catalytic activity">
    <reaction evidence="1">
        <text>adenosine(2503) in 23S rRNA + 2 reduced [2Fe-2S]-[ferredoxin] + 2 S-adenosyl-L-methionine = 2-methyladenosine(2503) in 23S rRNA + 5'-deoxyadenosine + L-methionine + 2 oxidized [2Fe-2S]-[ferredoxin] + S-adenosyl-L-homocysteine</text>
        <dbReference type="Rhea" id="RHEA:42916"/>
        <dbReference type="Rhea" id="RHEA-COMP:10000"/>
        <dbReference type="Rhea" id="RHEA-COMP:10001"/>
        <dbReference type="Rhea" id="RHEA-COMP:10152"/>
        <dbReference type="Rhea" id="RHEA-COMP:10282"/>
        <dbReference type="ChEBI" id="CHEBI:17319"/>
        <dbReference type="ChEBI" id="CHEBI:33737"/>
        <dbReference type="ChEBI" id="CHEBI:33738"/>
        <dbReference type="ChEBI" id="CHEBI:57844"/>
        <dbReference type="ChEBI" id="CHEBI:57856"/>
        <dbReference type="ChEBI" id="CHEBI:59789"/>
        <dbReference type="ChEBI" id="CHEBI:74411"/>
        <dbReference type="ChEBI" id="CHEBI:74497"/>
        <dbReference type="EC" id="2.1.1.192"/>
    </reaction>
</comment>
<comment type="catalytic activity">
    <reaction evidence="1">
        <text>adenosine(37) in tRNA + 2 reduced [2Fe-2S]-[ferredoxin] + 2 S-adenosyl-L-methionine = 2-methyladenosine(37) in tRNA + 5'-deoxyadenosine + L-methionine + 2 oxidized [2Fe-2S]-[ferredoxin] + S-adenosyl-L-homocysteine</text>
        <dbReference type="Rhea" id="RHEA:43332"/>
        <dbReference type="Rhea" id="RHEA-COMP:10000"/>
        <dbReference type="Rhea" id="RHEA-COMP:10001"/>
        <dbReference type="Rhea" id="RHEA-COMP:10162"/>
        <dbReference type="Rhea" id="RHEA-COMP:10485"/>
        <dbReference type="ChEBI" id="CHEBI:17319"/>
        <dbReference type="ChEBI" id="CHEBI:33737"/>
        <dbReference type="ChEBI" id="CHEBI:33738"/>
        <dbReference type="ChEBI" id="CHEBI:57844"/>
        <dbReference type="ChEBI" id="CHEBI:57856"/>
        <dbReference type="ChEBI" id="CHEBI:59789"/>
        <dbReference type="ChEBI" id="CHEBI:74411"/>
        <dbReference type="ChEBI" id="CHEBI:74497"/>
        <dbReference type="EC" id="2.1.1.192"/>
    </reaction>
</comment>
<comment type="cofactor">
    <cofactor evidence="1">
        <name>[4Fe-4S] cluster</name>
        <dbReference type="ChEBI" id="CHEBI:49883"/>
    </cofactor>
    <text evidence="1">Binds 1 [4Fe-4S] cluster. The cluster is coordinated with 3 cysteines and an exchangeable S-adenosyl-L-methionine.</text>
</comment>
<comment type="subcellular location">
    <subcellularLocation>
        <location evidence="1">Cytoplasm</location>
    </subcellularLocation>
</comment>
<comment type="miscellaneous">
    <text evidence="1">Reaction proceeds by a ping-pong mechanism involving intermediate methylation of a conserved cysteine residue.</text>
</comment>
<comment type="similarity">
    <text evidence="1">Belongs to the radical SAM superfamily. RlmN family.</text>
</comment>
<feature type="chain" id="PRO_0000350252" description="Dual-specificity RNA methyltransferase RlmN">
    <location>
        <begin position="1"/>
        <end position="362"/>
    </location>
</feature>
<feature type="domain" description="Radical SAM core" evidence="2">
    <location>
        <begin position="97"/>
        <end position="333"/>
    </location>
</feature>
<feature type="active site" description="Proton acceptor" evidence="1">
    <location>
        <position position="91"/>
    </location>
</feature>
<feature type="active site" description="S-methylcysteine intermediate" evidence="1">
    <location>
        <position position="338"/>
    </location>
</feature>
<feature type="binding site" evidence="1">
    <location>
        <position position="111"/>
    </location>
    <ligand>
        <name>[4Fe-4S] cluster</name>
        <dbReference type="ChEBI" id="CHEBI:49883"/>
        <note>4Fe-4S-S-AdoMet</note>
    </ligand>
</feature>
<feature type="binding site" evidence="1">
    <location>
        <position position="115"/>
    </location>
    <ligand>
        <name>[4Fe-4S] cluster</name>
        <dbReference type="ChEBI" id="CHEBI:49883"/>
        <note>4Fe-4S-S-AdoMet</note>
    </ligand>
</feature>
<feature type="binding site" evidence="1">
    <location>
        <position position="118"/>
    </location>
    <ligand>
        <name>[4Fe-4S] cluster</name>
        <dbReference type="ChEBI" id="CHEBI:49883"/>
        <note>4Fe-4S-S-AdoMet</note>
    </ligand>
</feature>
<feature type="binding site" evidence="1">
    <location>
        <begin position="164"/>
        <end position="165"/>
    </location>
    <ligand>
        <name>S-adenosyl-L-methionine</name>
        <dbReference type="ChEBI" id="CHEBI:59789"/>
    </ligand>
</feature>
<feature type="binding site" evidence="1">
    <location>
        <position position="196"/>
    </location>
    <ligand>
        <name>S-adenosyl-L-methionine</name>
        <dbReference type="ChEBI" id="CHEBI:59789"/>
    </ligand>
</feature>
<feature type="binding site" evidence="1">
    <location>
        <begin position="218"/>
        <end position="220"/>
    </location>
    <ligand>
        <name>S-adenosyl-L-methionine</name>
        <dbReference type="ChEBI" id="CHEBI:59789"/>
    </ligand>
</feature>
<feature type="binding site" evidence="1">
    <location>
        <position position="295"/>
    </location>
    <ligand>
        <name>S-adenosyl-L-methionine</name>
        <dbReference type="ChEBI" id="CHEBI:59789"/>
    </ligand>
</feature>
<feature type="disulfide bond" description="(transient)" evidence="1">
    <location>
        <begin position="104"/>
        <end position="338"/>
    </location>
</feature>
<keyword id="KW-0004">4Fe-4S</keyword>
<keyword id="KW-0963">Cytoplasm</keyword>
<keyword id="KW-1015">Disulfide bond</keyword>
<keyword id="KW-0408">Iron</keyword>
<keyword id="KW-0411">Iron-sulfur</keyword>
<keyword id="KW-0479">Metal-binding</keyword>
<keyword id="KW-0489">Methyltransferase</keyword>
<keyword id="KW-1185">Reference proteome</keyword>
<keyword id="KW-0698">rRNA processing</keyword>
<keyword id="KW-0949">S-adenosyl-L-methionine</keyword>
<keyword id="KW-0808">Transferase</keyword>
<keyword id="KW-0819">tRNA processing</keyword>
<dbReference type="EC" id="2.1.1.192" evidence="1"/>
<dbReference type="EMBL" id="CP000284">
    <property type="protein sequence ID" value="ABE49891.1"/>
    <property type="molecule type" value="Genomic_DNA"/>
</dbReference>
<dbReference type="RefSeq" id="WP_011479845.1">
    <property type="nucleotide sequence ID" value="NC_007947.1"/>
</dbReference>
<dbReference type="SMR" id="Q1H0U6"/>
<dbReference type="STRING" id="265072.Mfla_1623"/>
<dbReference type="KEGG" id="mfa:Mfla_1623"/>
<dbReference type="eggNOG" id="COG0820">
    <property type="taxonomic scope" value="Bacteria"/>
</dbReference>
<dbReference type="HOGENOM" id="CLU_029101_0_0_4"/>
<dbReference type="OrthoDB" id="9793973at2"/>
<dbReference type="Proteomes" id="UP000002440">
    <property type="component" value="Chromosome"/>
</dbReference>
<dbReference type="GO" id="GO:0005737">
    <property type="term" value="C:cytoplasm"/>
    <property type="evidence" value="ECO:0007669"/>
    <property type="project" value="UniProtKB-SubCell"/>
</dbReference>
<dbReference type="GO" id="GO:0051539">
    <property type="term" value="F:4 iron, 4 sulfur cluster binding"/>
    <property type="evidence" value="ECO:0007669"/>
    <property type="project" value="UniProtKB-UniRule"/>
</dbReference>
<dbReference type="GO" id="GO:0046872">
    <property type="term" value="F:metal ion binding"/>
    <property type="evidence" value="ECO:0007669"/>
    <property type="project" value="UniProtKB-KW"/>
</dbReference>
<dbReference type="GO" id="GO:0070040">
    <property type="term" value="F:rRNA (adenine(2503)-C2-)-methyltransferase activity"/>
    <property type="evidence" value="ECO:0007669"/>
    <property type="project" value="UniProtKB-UniRule"/>
</dbReference>
<dbReference type="GO" id="GO:0019843">
    <property type="term" value="F:rRNA binding"/>
    <property type="evidence" value="ECO:0007669"/>
    <property type="project" value="UniProtKB-UniRule"/>
</dbReference>
<dbReference type="GO" id="GO:0002935">
    <property type="term" value="F:tRNA (adenine(37)-C2)-methyltransferase activity"/>
    <property type="evidence" value="ECO:0007669"/>
    <property type="project" value="UniProtKB-UniRule"/>
</dbReference>
<dbReference type="GO" id="GO:0000049">
    <property type="term" value="F:tRNA binding"/>
    <property type="evidence" value="ECO:0007669"/>
    <property type="project" value="UniProtKB-UniRule"/>
</dbReference>
<dbReference type="GO" id="GO:0070475">
    <property type="term" value="P:rRNA base methylation"/>
    <property type="evidence" value="ECO:0007669"/>
    <property type="project" value="UniProtKB-UniRule"/>
</dbReference>
<dbReference type="GO" id="GO:0030488">
    <property type="term" value="P:tRNA methylation"/>
    <property type="evidence" value="ECO:0007669"/>
    <property type="project" value="UniProtKB-UniRule"/>
</dbReference>
<dbReference type="CDD" id="cd01335">
    <property type="entry name" value="Radical_SAM"/>
    <property type="match status" value="1"/>
</dbReference>
<dbReference type="FunFam" id="1.10.150.530:FF:000003">
    <property type="entry name" value="Dual-specificity RNA methyltransferase RlmN"/>
    <property type="match status" value="1"/>
</dbReference>
<dbReference type="FunFam" id="3.20.20.70:FF:000008">
    <property type="entry name" value="Dual-specificity RNA methyltransferase RlmN"/>
    <property type="match status" value="1"/>
</dbReference>
<dbReference type="Gene3D" id="1.10.150.530">
    <property type="match status" value="1"/>
</dbReference>
<dbReference type="Gene3D" id="3.20.20.70">
    <property type="entry name" value="Aldolase class I"/>
    <property type="match status" value="1"/>
</dbReference>
<dbReference type="HAMAP" id="MF_01849">
    <property type="entry name" value="RNA_methyltr_RlmN"/>
    <property type="match status" value="1"/>
</dbReference>
<dbReference type="InterPro" id="IPR013785">
    <property type="entry name" value="Aldolase_TIM"/>
</dbReference>
<dbReference type="InterPro" id="IPR040072">
    <property type="entry name" value="Methyltransferase_A"/>
</dbReference>
<dbReference type="InterPro" id="IPR048641">
    <property type="entry name" value="RlmN_N"/>
</dbReference>
<dbReference type="InterPro" id="IPR027492">
    <property type="entry name" value="RNA_MTrfase_RlmN"/>
</dbReference>
<dbReference type="InterPro" id="IPR004383">
    <property type="entry name" value="rRNA_lsu_MTrfase_RlmN/Cfr"/>
</dbReference>
<dbReference type="InterPro" id="IPR007197">
    <property type="entry name" value="rSAM"/>
</dbReference>
<dbReference type="NCBIfam" id="TIGR00048">
    <property type="entry name" value="rRNA_mod_RlmN"/>
    <property type="match status" value="1"/>
</dbReference>
<dbReference type="PANTHER" id="PTHR30544">
    <property type="entry name" value="23S RRNA METHYLTRANSFERASE"/>
    <property type="match status" value="1"/>
</dbReference>
<dbReference type="PANTHER" id="PTHR30544:SF5">
    <property type="entry name" value="RADICAL SAM CORE DOMAIN-CONTAINING PROTEIN"/>
    <property type="match status" value="1"/>
</dbReference>
<dbReference type="Pfam" id="PF04055">
    <property type="entry name" value="Radical_SAM"/>
    <property type="match status" value="1"/>
</dbReference>
<dbReference type="Pfam" id="PF21016">
    <property type="entry name" value="RlmN_N"/>
    <property type="match status" value="1"/>
</dbReference>
<dbReference type="PIRSF" id="PIRSF006004">
    <property type="entry name" value="CHP00048"/>
    <property type="match status" value="1"/>
</dbReference>
<dbReference type="SFLD" id="SFLDF00275">
    <property type="entry name" value="adenosine_C2_methyltransferase"/>
    <property type="match status" value="1"/>
</dbReference>
<dbReference type="SFLD" id="SFLDS00029">
    <property type="entry name" value="Radical_SAM"/>
    <property type="match status" value="1"/>
</dbReference>
<dbReference type="SUPFAM" id="SSF102114">
    <property type="entry name" value="Radical SAM enzymes"/>
    <property type="match status" value="1"/>
</dbReference>
<dbReference type="PROSITE" id="PS51918">
    <property type="entry name" value="RADICAL_SAM"/>
    <property type="match status" value="1"/>
</dbReference>
<sequence>MTVNLLNFNQAALAEYFQGIGEKPFRAKQMMRWMHHFGVSDFGEMTDIAKALREKLAKEAVVAPPSVHLEQISEDGTRKWLIDVGAGNGVETVFIPEDDRGTLCVSSQVGCALDCTFCSTGRQGFNRNLSVSEIIGQLWVANKALGRDPKGDRIISNVVMMGMGEPLANFDNVVAAMNIMLDDSAYGLSRRRVTLSTSGMVPAMDRLREECPVALAVSLHAPNDALRDEIVPINRKYPIAQLMAACQRYLEKAPRDFVTFEYVMLDGVNDTAEHARQLLNIVQDVPCKFNLIPFNPFPNSGYDTSKPDNIRRFRDILMQAGYVVTTRKTRGEDIDAACGQLAGKVQDKTKRSLRRIKVEAVA</sequence>
<proteinExistence type="inferred from homology"/>
<evidence type="ECO:0000255" key="1">
    <source>
        <dbReference type="HAMAP-Rule" id="MF_01849"/>
    </source>
</evidence>
<evidence type="ECO:0000255" key="2">
    <source>
        <dbReference type="PROSITE-ProRule" id="PRU01266"/>
    </source>
</evidence>
<organism>
    <name type="scientific">Methylobacillus flagellatus (strain ATCC 51484 / DSM 6875 / VKM B-1610 / KT)</name>
    <dbReference type="NCBI Taxonomy" id="265072"/>
    <lineage>
        <taxon>Bacteria</taxon>
        <taxon>Pseudomonadati</taxon>
        <taxon>Pseudomonadota</taxon>
        <taxon>Betaproteobacteria</taxon>
        <taxon>Nitrosomonadales</taxon>
        <taxon>Methylophilaceae</taxon>
        <taxon>Methylobacillus</taxon>
    </lineage>
</organism>
<gene>
    <name evidence="1" type="primary">rlmN</name>
    <name type="ordered locus">Mfla_1623</name>
</gene>